<organism>
    <name type="scientific">Thermosipho africanus (strain TCF52B)</name>
    <dbReference type="NCBI Taxonomy" id="484019"/>
    <lineage>
        <taxon>Bacteria</taxon>
        <taxon>Thermotogati</taxon>
        <taxon>Thermotogota</taxon>
        <taxon>Thermotogae</taxon>
        <taxon>Thermotogales</taxon>
        <taxon>Fervidobacteriaceae</taxon>
        <taxon>Thermosipho</taxon>
    </lineage>
</organism>
<feature type="chain" id="PRO_1000117407" description="Transcription elongation factor GreA">
    <location>
        <begin position="1"/>
        <end position="156"/>
    </location>
</feature>
<feature type="coiled-coil region" evidence="1">
    <location>
        <begin position="6"/>
        <end position="75"/>
    </location>
</feature>
<reference key="1">
    <citation type="journal article" date="2009" name="J. Bacteriol.">
        <title>The genome of Thermosipho africanus TCF52B: lateral genetic connections to the Firmicutes and Archaea.</title>
        <authorList>
            <person name="Nesboe C.L."/>
            <person name="Bapteste E."/>
            <person name="Curtis B."/>
            <person name="Dahle H."/>
            <person name="Lopez P."/>
            <person name="Macleod D."/>
            <person name="Dlutek M."/>
            <person name="Bowman S."/>
            <person name="Zhaxybayeva O."/>
            <person name="Birkeland N.-K."/>
            <person name="Doolittle W.F."/>
        </authorList>
    </citation>
    <scope>NUCLEOTIDE SEQUENCE [LARGE SCALE GENOMIC DNA]</scope>
    <source>
        <strain>TCF52B</strain>
    </source>
</reference>
<proteinExistence type="inferred from homology"/>
<evidence type="ECO:0000255" key="1">
    <source>
        <dbReference type="HAMAP-Rule" id="MF_00105"/>
    </source>
</evidence>
<accession>B7ID86</accession>
<keyword id="KW-0175">Coiled coil</keyword>
<keyword id="KW-0238">DNA-binding</keyword>
<keyword id="KW-1185">Reference proteome</keyword>
<keyword id="KW-0804">Transcription</keyword>
<keyword id="KW-0805">Transcription regulation</keyword>
<gene>
    <name evidence="1" type="primary">greA</name>
    <name type="ordered locus">THA_1522</name>
</gene>
<dbReference type="EMBL" id="CP001185">
    <property type="protein sequence ID" value="ACJ75963.1"/>
    <property type="molecule type" value="Genomic_DNA"/>
</dbReference>
<dbReference type="RefSeq" id="WP_004102051.1">
    <property type="nucleotide sequence ID" value="NC_011653.1"/>
</dbReference>
<dbReference type="SMR" id="B7ID86"/>
<dbReference type="STRING" id="484019.THA_1522"/>
<dbReference type="KEGG" id="taf:THA_1522"/>
<dbReference type="eggNOG" id="COG0782">
    <property type="taxonomic scope" value="Bacteria"/>
</dbReference>
<dbReference type="HOGENOM" id="CLU_101379_2_1_0"/>
<dbReference type="OrthoDB" id="9808774at2"/>
<dbReference type="Proteomes" id="UP000002453">
    <property type="component" value="Chromosome"/>
</dbReference>
<dbReference type="GO" id="GO:0003677">
    <property type="term" value="F:DNA binding"/>
    <property type="evidence" value="ECO:0007669"/>
    <property type="project" value="UniProtKB-UniRule"/>
</dbReference>
<dbReference type="GO" id="GO:0070063">
    <property type="term" value="F:RNA polymerase binding"/>
    <property type="evidence" value="ECO:0007669"/>
    <property type="project" value="InterPro"/>
</dbReference>
<dbReference type="GO" id="GO:0006354">
    <property type="term" value="P:DNA-templated transcription elongation"/>
    <property type="evidence" value="ECO:0007669"/>
    <property type="project" value="TreeGrafter"/>
</dbReference>
<dbReference type="GO" id="GO:0032784">
    <property type="term" value="P:regulation of DNA-templated transcription elongation"/>
    <property type="evidence" value="ECO:0007669"/>
    <property type="project" value="UniProtKB-UniRule"/>
</dbReference>
<dbReference type="FunFam" id="1.10.287.180:FF:000001">
    <property type="entry name" value="Transcription elongation factor GreA"/>
    <property type="match status" value="1"/>
</dbReference>
<dbReference type="FunFam" id="3.10.50.30:FF:000001">
    <property type="entry name" value="Transcription elongation factor GreA"/>
    <property type="match status" value="1"/>
</dbReference>
<dbReference type="Gene3D" id="3.10.50.30">
    <property type="entry name" value="Transcription elongation factor, GreA/GreB, C-terminal domain"/>
    <property type="match status" value="1"/>
</dbReference>
<dbReference type="Gene3D" id="1.10.287.180">
    <property type="entry name" value="Transcription elongation factor, GreA/GreB, N-terminal domain"/>
    <property type="match status" value="1"/>
</dbReference>
<dbReference type="HAMAP" id="MF_00105">
    <property type="entry name" value="GreA_GreB"/>
    <property type="match status" value="1"/>
</dbReference>
<dbReference type="InterPro" id="IPR036953">
    <property type="entry name" value="GreA/GreB_C_sf"/>
</dbReference>
<dbReference type="InterPro" id="IPR018151">
    <property type="entry name" value="TF_GreA/GreB_CS"/>
</dbReference>
<dbReference type="InterPro" id="IPR006359">
    <property type="entry name" value="Tscrpt_elong_fac_GreA"/>
</dbReference>
<dbReference type="InterPro" id="IPR028624">
    <property type="entry name" value="Tscrpt_elong_fac_GreA/B"/>
</dbReference>
<dbReference type="InterPro" id="IPR001437">
    <property type="entry name" value="Tscrpt_elong_fac_GreA/B_C"/>
</dbReference>
<dbReference type="InterPro" id="IPR023459">
    <property type="entry name" value="Tscrpt_elong_fac_GreA/B_fam"/>
</dbReference>
<dbReference type="InterPro" id="IPR022691">
    <property type="entry name" value="Tscrpt_elong_fac_GreA/B_N"/>
</dbReference>
<dbReference type="InterPro" id="IPR036805">
    <property type="entry name" value="Tscrpt_elong_fac_GreA/B_N_sf"/>
</dbReference>
<dbReference type="NCBIfam" id="TIGR01462">
    <property type="entry name" value="greA"/>
    <property type="match status" value="1"/>
</dbReference>
<dbReference type="NCBIfam" id="NF001263">
    <property type="entry name" value="PRK00226.1-4"/>
    <property type="match status" value="1"/>
</dbReference>
<dbReference type="PANTHER" id="PTHR30437">
    <property type="entry name" value="TRANSCRIPTION ELONGATION FACTOR GREA"/>
    <property type="match status" value="1"/>
</dbReference>
<dbReference type="PANTHER" id="PTHR30437:SF4">
    <property type="entry name" value="TRANSCRIPTION ELONGATION FACTOR GREA"/>
    <property type="match status" value="1"/>
</dbReference>
<dbReference type="Pfam" id="PF01272">
    <property type="entry name" value="GreA_GreB"/>
    <property type="match status" value="1"/>
</dbReference>
<dbReference type="Pfam" id="PF03449">
    <property type="entry name" value="GreA_GreB_N"/>
    <property type="match status" value="1"/>
</dbReference>
<dbReference type="PIRSF" id="PIRSF006092">
    <property type="entry name" value="GreA_GreB"/>
    <property type="match status" value="1"/>
</dbReference>
<dbReference type="SUPFAM" id="SSF54534">
    <property type="entry name" value="FKBP-like"/>
    <property type="match status" value="1"/>
</dbReference>
<dbReference type="SUPFAM" id="SSF46557">
    <property type="entry name" value="GreA transcript cleavage protein, N-terminal domain"/>
    <property type="match status" value="1"/>
</dbReference>
<dbReference type="PROSITE" id="PS00829">
    <property type="entry name" value="GREAB_1"/>
    <property type="match status" value="1"/>
</dbReference>
<comment type="function">
    <text evidence="1">Necessary for efficient RNA polymerase transcription elongation past template-encoded arresting sites. The arresting sites in DNA have the property of trapping a certain fraction of elongating RNA polymerases that pass through, resulting in locked ternary complexes. Cleavage of the nascent transcript by cleavage factors such as GreA or GreB allows the resumption of elongation from the new 3'terminus. GreA releases sequences of 2 to 3 nucleotides.</text>
</comment>
<comment type="similarity">
    <text evidence="1">Belongs to the GreA/GreB family.</text>
</comment>
<protein>
    <recommendedName>
        <fullName evidence="1">Transcription elongation factor GreA</fullName>
    </recommendedName>
    <alternativeName>
        <fullName evidence="1">Transcript cleavage factor GreA</fullName>
    </alternativeName>
</protein>
<name>GREA_THEAB</name>
<sequence length="156" mass="17702">MKKESIYLTKEGYEKLKAELDQLKQKLMFEIAQRIKEARELGDLSENSEYQEAKNEQGRIAARINELENMLSKAEVIEGLDTNVINIGNWVLIKNLDTGEEKTIQIVTPHEADVFNNKISFESPIGRVLVGKKVGEVVKIKAPKGVFKYQILGIKI</sequence>